<feature type="chain" id="PRO_0000379081" description="Uncharacterized protein B354L">
    <location>
        <begin position="1"/>
        <end position="354"/>
    </location>
</feature>
<proteinExistence type="evidence at transcript level"/>
<organismHost>
    <name type="scientific">Ornithodoros</name>
    <name type="common">relapsing fever ticks</name>
    <dbReference type="NCBI Taxonomy" id="6937"/>
</organismHost>
<organismHost>
    <name type="scientific">Sus scrofa</name>
    <name type="common">Pig</name>
    <dbReference type="NCBI Taxonomy" id="9823"/>
</organismHost>
<keyword id="KW-0426">Late protein</keyword>
<keyword id="KW-1185">Reference proteome</keyword>
<gene>
    <name type="ordered locus">Ba71V-078</name>
    <name type="ORF">B354L</name>
</gene>
<reference key="1">
    <citation type="journal article" date="1995" name="Virology">
        <title>Analysis of the complete nucleotide sequence of African swine fever virus.</title>
        <authorList>
            <person name="Yanez R.J."/>
            <person name="Rodriguez J.M."/>
            <person name="Nogal M.L."/>
            <person name="Yuste L."/>
            <person name="Enriquez C."/>
            <person name="Rodriguez J.F."/>
            <person name="Vinuela E."/>
        </authorList>
    </citation>
    <scope>NUCLEOTIDE SEQUENCE [LARGE SCALE GENOMIC DNA]</scope>
</reference>
<reference key="2">
    <citation type="journal article" date="2020" name="J. Virol.">
        <title>The African Swine Fever Virus Transcriptome.</title>
        <authorList>
            <person name="Cackett G."/>
            <person name="Matelska D."/>
            <person name="Sykora M."/>
            <person name="Portugal R."/>
            <person name="Malecki M."/>
            <person name="Baehler J."/>
            <person name="Dixon L."/>
            <person name="Werner F."/>
        </authorList>
    </citation>
    <scope>INDUCTION</scope>
</reference>
<comment type="induction">
    <text evidence="1">Expressed in the late phase of the viral replicative cycle.</text>
</comment>
<comment type="similarity">
    <text evidence="2">Belongs to the asfivirus B354L family.</text>
</comment>
<dbReference type="EMBL" id="U18466">
    <property type="protein sequence ID" value="AAA65308.1"/>
    <property type="molecule type" value="Genomic_DNA"/>
</dbReference>
<dbReference type="RefSeq" id="NP_042772.1">
    <property type="nucleotide sequence ID" value="NC_001659.2"/>
</dbReference>
<dbReference type="GeneID" id="22220308"/>
<dbReference type="KEGG" id="vg:22220308"/>
<dbReference type="Proteomes" id="UP000000624">
    <property type="component" value="Segment"/>
</dbReference>
<dbReference type="InterPro" id="IPR027417">
    <property type="entry name" value="P-loop_NTPase"/>
</dbReference>
<dbReference type="SUPFAM" id="SSF52540">
    <property type="entry name" value="P-loop containing nucleoside triphosphate hydrolases"/>
    <property type="match status" value="2"/>
</dbReference>
<name>VF354_ASFB7</name>
<organism>
    <name type="scientific">African swine fever virus (strain Badajoz 1971 Vero-adapted)</name>
    <name type="common">Ba71V</name>
    <name type="synonym">ASFV</name>
    <dbReference type="NCBI Taxonomy" id="10498"/>
    <lineage>
        <taxon>Viruses</taxon>
        <taxon>Varidnaviria</taxon>
        <taxon>Bamfordvirae</taxon>
        <taxon>Nucleocytoviricota</taxon>
        <taxon>Pokkesviricetes</taxon>
        <taxon>Asfuvirales</taxon>
        <taxon>Asfarviridae</taxon>
        <taxon>Asfivirus</taxon>
        <taxon>African swine fever virus</taxon>
    </lineage>
</organism>
<evidence type="ECO:0000269" key="1">
    <source>
    </source>
</evidence>
<evidence type="ECO:0000305" key="2"/>
<sequence>MALTTHSGKLIPELQFKAHHFIDKTTVLYGPSKTGKTVYVKHIMKILQPHIEQILVVAPSEPSNRSYEGFVHPTLIHYRLWLADKQKKNDNKGAERFLEAIWQRQTMMSSIYSRVNNIDMLKTLYHKLPIDIQQKENKNIAKVECLKAEQTDQKKEEKITSLYQQLLKKIIIQNIHMYKNLCLTEDEKFTLNYINLNPRLLLILDDCAAELHPLFTKEIFKKFFYQNRHCFISMIICCQDDTDLPANLRKNAFVSIFTNASICMSNFSRQSNRYSKQDKEYVEEISHIVFKGYRKLVYIREDENRQHFYHSTVPLPTAFSFGSKALLKLCKAVYSKEVVIDKSNPYWSKFRLNF</sequence>
<protein>
    <recommendedName>
        <fullName>Uncharacterized protein B354L</fullName>
        <shortName>pB354L</shortName>
    </recommendedName>
</protein>
<accession>Q65168</accession>